<keyword id="KW-0456">Lyase</keyword>
<keyword id="KW-1185">Reference proteome</keyword>
<dbReference type="EC" id="4.2.1.-" evidence="1"/>
<dbReference type="EMBL" id="D38161">
    <property type="protein sequence ID" value="BAA07360.1"/>
    <property type="molecule type" value="Genomic_DNA"/>
</dbReference>
<dbReference type="EMBL" id="D50453">
    <property type="protein sequence ID" value="BAA09038.1"/>
    <property type="molecule type" value="Genomic_DNA"/>
</dbReference>
<dbReference type="EMBL" id="AL009126">
    <property type="protein sequence ID" value="CAB12215.3"/>
    <property type="molecule type" value="Genomic_DNA"/>
</dbReference>
<dbReference type="PIR" id="I39897">
    <property type="entry name" value="I39897"/>
</dbReference>
<dbReference type="RefSeq" id="WP_010886407.1">
    <property type="nucleotide sequence ID" value="NZ_OZ025638.1"/>
</dbReference>
<dbReference type="SMR" id="P42966"/>
<dbReference type="FunCoup" id="P42966">
    <property type="interactions" value="10"/>
</dbReference>
<dbReference type="STRING" id="224308.BSU04070"/>
<dbReference type="PaxDb" id="224308-BSU04070"/>
<dbReference type="EnsemblBacteria" id="CAB12215">
    <property type="protein sequence ID" value="CAB12215"/>
    <property type="gene ID" value="BSU_04070"/>
</dbReference>
<dbReference type="GeneID" id="938647"/>
<dbReference type="KEGG" id="bsu:BSU04070"/>
<dbReference type="PATRIC" id="fig|224308.43.peg.424"/>
<dbReference type="eggNOG" id="COG4336">
    <property type="taxonomic scope" value="Bacteria"/>
</dbReference>
<dbReference type="InParanoid" id="P42966"/>
<dbReference type="OrthoDB" id="149585at2"/>
<dbReference type="PhylomeDB" id="P42966"/>
<dbReference type="BioCyc" id="BSUB:BSU04070-MONOMER"/>
<dbReference type="Proteomes" id="UP000001570">
    <property type="component" value="Chromosome"/>
</dbReference>
<dbReference type="GO" id="GO:0016829">
    <property type="term" value="F:lyase activity"/>
    <property type="evidence" value="ECO:0007669"/>
    <property type="project" value="UniProtKB-KW"/>
</dbReference>
<dbReference type="FunFam" id="3.30.2040.10:FF:000001">
    <property type="entry name" value="D-glutamate cyclase, mitochondrial"/>
    <property type="match status" value="1"/>
</dbReference>
<dbReference type="Gene3D" id="3.40.1640.10">
    <property type="entry name" value="PSTPO5379-like"/>
    <property type="match status" value="1"/>
</dbReference>
<dbReference type="Gene3D" id="3.30.2040.10">
    <property type="entry name" value="PSTPO5379-like domain"/>
    <property type="match status" value="1"/>
</dbReference>
<dbReference type="HAMAP" id="MF_01830">
    <property type="entry name" value="Hydro_lyase"/>
    <property type="match status" value="1"/>
</dbReference>
<dbReference type="InterPro" id="IPR009906">
    <property type="entry name" value="D-Glu_cyclase"/>
</dbReference>
<dbReference type="InterPro" id="IPR038021">
    <property type="entry name" value="Putative_hydro-lyase"/>
</dbReference>
<dbReference type="InterPro" id="IPR016938">
    <property type="entry name" value="UPF0317"/>
</dbReference>
<dbReference type="NCBIfam" id="NF003969">
    <property type="entry name" value="PRK05463.1"/>
    <property type="match status" value="1"/>
</dbReference>
<dbReference type="PANTHER" id="PTHR32022">
    <property type="entry name" value="D-GLUTAMATE CYCLASE, MITOCHONDRIAL"/>
    <property type="match status" value="1"/>
</dbReference>
<dbReference type="PANTHER" id="PTHR32022:SF10">
    <property type="entry name" value="D-GLUTAMATE CYCLASE, MITOCHONDRIAL"/>
    <property type="match status" value="1"/>
</dbReference>
<dbReference type="Pfam" id="PF07286">
    <property type="entry name" value="D-Glu_cyclase"/>
    <property type="match status" value="1"/>
</dbReference>
<dbReference type="PIRSF" id="PIRSF029755">
    <property type="entry name" value="UCP029755"/>
    <property type="match status" value="1"/>
</dbReference>
<dbReference type="SUPFAM" id="SSF160920">
    <property type="entry name" value="PSTPO5379-like"/>
    <property type="match status" value="1"/>
</dbReference>
<organism>
    <name type="scientific">Bacillus subtilis (strain 168)</name>
    <dbReference type="NCBI Taxonomy" id="224308"/>
    <lineage>
        <taxon>Bacteria</taxon>
        <taxon>Bacillati</taxon>
        <taxon>Bacillota</taxon>
        <taxon>Bacilli</taxon>
        <taxon>Bacillales</taxon>
        <taxon>Bacillaceae</taxon>
        <taxon>Bacillus</taxon>
    </lineage>
</organism>
<sequence length="257" mass="27794">MAPKDVRALIREGKINGPTAGMSGGYAQANLVVLKKDLAFDFLLFCQRNQKPCPVLDVTEAGSPVPSLAAPDADIRTDFPKYRIYRHGILTEEVSDITPYWEDDFVGFLIGCSFSFEQALINNGIAVRHIDEGTNVSMYKTNIDCVPAGAFHGQMVVSMRPVPERLAVRAAQVTSRFPAVHGGPIHIGNPGAIGIRDLGKPDFGDAVSIRDGEVPVFWACGVTPQAVAMNVKPEMVITHAPGHMLITDIRDESLAVL</sequence>
<name>YCSI_BACSU</name>
<protein>
    <recommendedName>
        <fullName>Putative hydro-lyase YcsI</fullName>
        <ecNumber evidence="1">4.2.1.-</ecNumber>
    </recommendedName>
</protein>
<feature type="chain" id="PRO_0000217161" description="Putative hydro-lyase YcsI">
    <location>
        <begin position="1"/>
        <end position="257"/>
    </location>
</feature>
<feature type="sequence conflict" description="In Ref. 1; BAA07360 and 2; BAA09038." evidence="2" ref="1 2">
    <original>AAPDADI</original>
    <variation>LRRMLIS</variation>
    <location>
        <begin position="69"/>
        <end position="75"/>
    </location>
</feature>
<feature type="sequence conflict" description="In Ref. 1; BAA07360 and 2; BAA09038." evidence="2" ref="1 2">
    <original>VPA</original>
    <variation>FPV</variation>
    <location>
        <begin position="146"/>
        <end position="148"/>
    </location>
</feature>
<evidence type="ECO:0000255" key="1">
    <source>
        <dbReference type="HAMAP-Rule" id="MF_01830"/>
    </source>
</evidence>
<evidence type="ECO:0000305" key="2"/>
<reference key="1">
    <citation type="journal article" date="1995" name="Microbiology">
        <title>Determination of a 17,484 bp nucleotide sequence around the 39 degrees region of the Bacillus subtilis chromosome and similarity analysis of the products of putative ORFs.</title>
        <authorList>
            <person name="Akagawa E."/>
            <person name="Kurita K."/>
            <person name="Sugawara T."/>
            <person name="Nakamura K."/>
            <person name="Kasahara Y."/>
            <person name="Ogasawara N."/>
            <person name="Yamane K."/>
        </authorList>
    </citation>
    <scope>NUCLEOTIDE SEQUENCE [GENOMIC DNA]</scope>
    <source>
        <strain>168</strain>
    </source>
</reference>
<reference key="2">
    <citation type="journal article" date="1996" name="Microbiology">
        <title>The 25 degrees-36 degrees region of the Bacillus subtilis chromosome: determination of the sequence of a 146 kb segment and identification of 113 genes.</title>
        <authorList>
            <person name="Yamane K."/>
            <person name="Kumano M."/>
            <person name="Kurita K."/>
        </authorList>
    </citation>
    <scope>NUCLEOTIDE SEQUENCE [GENOMIC DNA]</scope>
    <source>
        <strain>168</strain>
    </source>
</reference>
<reference key="3">
    <citation type="journal article" date="1997" name="Nature">
        <title>The complete genome sequence of the Gram-positive bacterium Bacillus subtilis.</title>
        <authorList>
            <person name="Kunst F."/>
            <person name="Ogasawara N."/>
            <person name="Moszer I."/>
            <person name="Albertini A.M."/>
            <person name="Alloni G."/>
            <person name="Azevedo V."/>
            <person name="Bertero M.G."/>
            <person name="Bessieres P."/>
            <person name="Bolotin A."/>
            <person name="Borchert S."/>
            <person name="Borriss R."/>
            <person name="Boursier L."/>
            <person name="Brans A."/>
            <person name="Braun M."/>
            <person name="Brignell S.C."/>
            <person name="Bron S."/>
            <person name="Brouillet S."/>
            <person name="Bruschi C.V."/>
            <person name="Caldwell B."/>
            <person name="Capuano V."/>
            <person name="Carter N.M."/>
            <person name="Choi S.-K."/>
            <person name="Codani J.-J."/>
            <person name="Connerton I.F."/>
            <person name="Cummings N.J."/>
            <person name="Daniel R.A."/>
            <person name="Denizot F."/>
            <person name="Devine K.M."/>
            <person name="Duesterhoeft A."/>
            <person name="Ehrlich S.D."/>
            <person name="Emmerson P.T."/>
            <person name="Entian K.-D."/>
            <person name="Errington J."/>
            <person name="Fabret C."/>
            <person name="Ferrari E."/>
            <person name="Foulger D."/>
            <person name="Fritz C."/>
            <person name="Fujita M."/>
            <person name="Fujita Y."/>
            <person name="Fuma S."/>
            <person name="Galizzi A."/>
            <person name="Galleron N."/>
            <person name="Ghim S.-Y."/>
            <person name="Glaser P."/>
            <person name="Goffeau A."/>
            <person name="Golightly E.J."/>
            <person name="Grandi G."/>
            <person name="Guiseppi G."/>
            <person name="Guy B.J."/>
            <person name="Haga K."/>
            <person name="Haiech J."/>
            <person name="Harwood C.R."/>
            <person name="Henaut A."/>
            <person name="Hilbert H."/>
            <person name="Holsappel S."/>
            <person name="Hosono S."/>
            <person name="Hullo M.-F."/>
            <person name="Itaya M."/>
            <person name="Jones L.-M."/>
            <person name="Joris B."/>
            <person name="Karamata D."/>
            <person name="Kasahara Y."/>
            <person name="Klaerr-Blanchard M."/>
            <person name="Klein C."/>
            <person name="Kobayashi Y."/>
            <person name="Koetter P."/>
            <person name="Koningstein G."/>
            <person name="Krogh S."/>
            <person name="Kumano M."/>
            <person name="Kurita K."/>
            <person name="Lapidus A."/>
            <person name="Lardinois S."/>
            <person name="Lauber J."/>
            <person name="Lazarevic V."/>
            <person name="Lee S.-M."/>
            <person name="Levine A."/>
            <person name="Liu H."/>
            <person name="Masuda S."/>
            <person name="Mauel C."/>
            <person name="Medigue C."/>
            <person name="Medina N."/>
            <person name="Mellado R.P."/>
            <person name="Mizuno M."/>
            <person name="Moestl D."/>
            <person name="Nakai S."/>
            <person name="Noback M."/>
            <person name="Noone D."/>
            <person name="O'Reilly M."/>
            <person name="Ogawa K."/>
            <person name="Ogiwara A."/>
            <person name="Oudega B."/>
            <person name="Park S.-H."/>
            <person name="Parro V."/>
            <person name="Pohl T.M."/>
            <person name="Portetelle D."/>
            <person name="Porwollik S."/>
            <person name="Prescott A.M."/>
            <person name="Presecan E."/>
            <person name="Pujic P."/>
            <person name="Purnelle B."/>
            <person name="Rapoport G."/>
            <person name="Rey M."/>
            <person name="Reynolds S."/>
            <person name="Rieger M."/>
            <person name="Rivolta C."/>
            <person name="Rocha E."/>
            <person name="Roche B."/>
            <person name="Rose M."/>
            <person name="Sadaie Y."/>
            <person name="Sato T."/>
            <person name="Scanlan E."/>
            <person name="Schleich S."/>
            <person name="Schroeter R."/>
            <person name="Scoffone F."/>
            <person name="Sekiguchi J."/>
            <person name="Sekowska A."/>
            <person name="Seror S.J."/>
            <person name="Serror P."/>
            <person name="Shin B.-S."/>
            <person name="Soldo B."/>
            <person name="Sorokin A."/>
            <person name="Tacconi E."/>
            <person name="Takagi T."/>
            <person name="Takahashi H."/>
            <person name="Takemaru K."/>
            <person name="Takeuchi M."/>
            <person name="Tamakoshi A."/>
            <person name="Tanaka T."/>
            <person name="Terpstra P."/>
            <person name="Tognoni A."/>
            <person name="Tosato V."/>
            <person name="Uchiyama S."/>
            <person name="Vandenbol M."/>
            <person name="Vannier F."/>
            <person name="Vassarotti A."/>
            <person name="Viari A."/>
            <person name="Wambutt R."/>
            <person name="Wedler E."/>
            <person name="Wedler H."/>
            <person name="Weitzenegger T."/>
            <person name="Winters P."/>
            <person name="Wipat A."/>
            <person name="Yamamoto H."/>
            <person name="Yamane K."/>
            <person name="Yasumoto K."/>
            <person name="Yata K."/>
            <person name="Yoshida K."/>
            <person name="Yoshikawa H.-F."/>
            <person name="Zumstein E."/>
            <person name="Yoshikawa H."/>
            <person name="Danchin A."/>
        </authorList>
    </citation>
    <scope>NUCLEOTIDE SEQUENCE [LARGE SCALE GENOMIC DNA]</scope>
    <source>
        <strain>168</strain>
    </source>
</reference>
<reference key="4">
    <citation type="journal article" date="2009" name="Microbiology">
        <title>From a consortium sequence to a unified sequence: the Bacillus subtilis 168 reference genome a decade later.</title>
        <authorList>
            <person name="Barbe V."/>
            <person name="Cruveiller S."/>
            <person name="Kunst F."/>
            <person name="Lenoble P."/>
            <person name="Meurice G."/>
            <person name="Sekowska A."/>
            <person name="Vallenet D."/>
            <person name="Wang T."/>
            <person name="Moszer I."/>
            <person name="Medigue C."/>
            <person name="Danchin A."/>
        </authorList>
    </citation>
    <scope>SEQUENCE REVISION TO 69-75 AND 146-148</scope>
</reference>
<comment type="similarity">
    <text evidence="2">Belongs to the D-glutamate cyclase family.</text>
</comment>
<gene>
    <name type="primary">ycsI</name>
    <name type="ordered locus">BSU04070</name>
</gene>
<proteinExistence type="inferred from homology"/>
<accession>P42966</accession>